<organism>
    <name type="scientific">Clostridium botulinum (strain Okra / Type B1)</name>
    <dbReference type="NCBI Taxonomy" id="498213"/>
    <lineage>
        <taxon>Bacteria</taxon>
        <taxon>Bacillati</taxon>
        <taxon>Bacillota</taxon>
        <taxon>Clostridia</taxon>
        <taxon>Eubacteriales</taxon>
        <taxon>Clostridiaceae</taxon>
        <taxon>Clostridium</taxon>
    </lineage>
</organism>
<sequence length="269" mass="30557">MFKIYAVSDSIGETAEQVANATAYQFGSSVKVERVPYVKTFEDVNNLISIIKNPNEAMIISTIVLVDIREFLVQRCVESGIHISNVLGPCISLVSTILNKTPEYKPGAVWDMDKKYYKKIEAMEFAIRYDDSKDHSGIKHADIVLIGLSRTSKTPLSIYLANKGIKALNIPLMPEVPVPEELFEIDRKKIIGLTIDPMHLIEIRRHRVDNMMKIPTELKYANAERVLDELEFADKIMRKLKCKVIDVTKRAIEDTALIIMESVFSDRII</sequence>
<dbReference type="EC" id="2.7.11.32" evidence="1"/>
<dbReference type="EC" id="2.7.4.27" evidence="1"/>
<dbReference type="EMBL" id="CP000939">
    <property type="protein sequence ID" value="ACA43943.1"/>
    <property type="molecule type" value="Genomic_DNA"/>
</dbReference>
<dbReference type="RefSeq" id="WP_003359375.1">
    <property type="nucleotide sequence ID" value="NC_010516.1"/>
</dbReference>
<dbReference type="SMR" id="B1IHN7"/>
<dbReference type="KEGG" id="cbb:CLD_0863"/>
<dbReference type="HOGENOM" id="CLU_046206_2_1_9"/>
<dbReference type="Proteomes" id="UP000008541">
    <property type="component" value="Chromosome"/>
</dbReference>
<dbReference type="GO" id="GO:0043531">
    <property type="term" value="F:ADP binding"/>
    <property type="evidence" value="ECO:0007669"/>
    <property type="project" value="UniProtKB-UniRule"/>
</dbReference>
<dbReference type="GO" id="GO:0005524">
    <property type="term" value="F:ATP binding"/>
    <property type="evidence" value="ECO:0007669"/>
    <property type="project" value="InterPro"/>
</dbReference>
<dbReference type="GO" id="GO:0016776">
    <property type="term" value="F:phosphotransferase activity, phosphate group as acceptor"/>
    <property type="evidence" value="ECO:0007669"/>
    <property type="project" value="UniProtKB-UniRule"/>
</dbReference>
<dbReference type="GO" id="GO:0004674">
    <property type="term" value="F:protein serine/threonine kinase activity"/>
    <property type="evidence" value="ECO:0007669"/>
    <property type="project" value="UniProtKB-UniRule"/>
</dbReference>
<dbReference type="HAMAP" id="MF_00921">
    <property type="entry name" value="PDRP"/>
    <property type="match status" value="1"/>
</dbReference>
<dbReference type="InterPro" id="IPR005177">
    <property type="entry name" value="Kinase-pyrophosphorylase"/>
</dbReference>
<dbReference type="InterPro" id="IPR026565">
    <property type="entry name" value="PPDK_reg"/>
</dbReference>
<dbReference type="NCBIfam" id="NF003742">
    <property type="entry name" value="PRK05339.1"/>
    <property type="match status" value="1"/>
</dbReference>
<dbReference type="PANTHER" id="PTHR31756">
    <property type="entry name" value="PYRUVATE, PHOSPHATE DIKINASE REGULATORY PROTEIN 1, CHLOROPLASTIC"/>
    <property type="match status" value="1"/>
</dbReference>
<dbReference type="PANTHER" id="PTHR31756:SF3">
    <property type="entry name" value="PYRUVATE, PHOSPHATE DIKINASE REGULATORY PROTEIN 1, CHLOROPLASTIC"/>
    <property type="match status" value="1"/>
</dbReference>
<dbReference type="Pfam" id="PF03618">
    <property type="entry name" value="Kinase-PPPase"/>
    <property type="match status" value="1"/>
</dbReference>
<reference key="1">
    <citation type="journal article" date="2007" name="PLoS ONE">
        <title>Analysis of the neurotoxin complex genes in Clostridium botulinum A1-A4 and B1 strains: BoNT/A3, /Ba4 and /B1 clusters are located within plasmids.</title>
        <authorList>
            <person name="Smith T.J."/>
            <person name="Hill K.K."/>
            <person name="Foley B.T."/>
            <person name="Detter J.C."/>
            <person name="Munk A.C."/>
            <person name="Bruce D.C."/>
            <person name="Doggett N.A."/>
            <person name="Smith L.A."/>
            <person name="Marks J.D."/>
            <person name="Xie G."/>
            <person name="Brettin T.S."/>
        </authorList>
    </citation>
    <scope>NUCLEOTIDE SEQUENCE [LARGE SCALE GENOMIC DNA]</scope>
    <source>
        <strain>Okra / Type B1</strain>
    </source>
</reference>
<protein>
    <recommendedName>
        <fullName evidence="1">Putative pyruvate, phosphate dikinase regulatory protein</fullName>
        <shortName evidence="1">PPDK regulatory protein</shortName>
        <ecNumber evidence="1">2.7.11.32</ecNumber>
        <ecNumber evidence="1">2.7.4.27</ecNumber>
    </recommendedName>
</protein>
<accession>B1IHN7</accession>
<gene>
    <name type="ordered locus">CLD_0863</name>
</gene>
<proteinExistence type="inferred from homology"/>
<comment type="function">
    <text evidence="1">Bifunctional serine/threonine kinase and phosphorylase involved in the regulation of the pyruvate, phosphate dikinase (PPDK) by catalyzing its phosphorylation/dephosphorylation.</text>
</comment>
<comment type="catalytic activity">
    <reaction evidence="1">
        <text>N(tele)-phospho-L-histidyl/L-threonyl-[pyruvate, phosphate dikinase] + ADP = N(tele)-phospho-L-histidyl/O-phospho-L-threonyl-[pyruvate, phosphate dikinase] + AMP + H(+)</text>
        <dbReference type="Rhea" id="RHEA:43692"/>
        <dbReference type="Rhea" id="RHEA-COMP:10650"/>
        <dbReference type="Rhea" id="RHEA-COMP:10651"/>
        <dbReference type="ChEBI" id="CHEBI:15378"/>
        <dbReference type="ChEBI" id="CHEBI:30013"/>
        <dbReference type="ChEBI" id="CHEBI:61977"/>
        <dbReference type="ChEBI" id="CHEBI:83586"/>
        <dbReference type="ChEBI" id="CHEBI:456215"/>
        <dbReference type="ChEBI" id="CHEBI:456216"/>
        <dbReference type="EC" id="2.7.11.32"/>
    </reaction>
</comment>
<comment type="catalytic activity">
    <reaction evidence="1">
        <text>N(tele)-phospho-L-histidyl/O-phospho-L-threonyl-[pyruvate, phosphate dikinase] + phosphate + H(+) = N(tele)-phospho-L-histidyl/L-threonyl-[pyruvate, phosphate dikinase] + diphosphate</text>
        <dbReference type="Rhea" id="RHEA:43696"/>
        <dbReference type="Rhea" id="RHEA-COMP:10650"/>
        <dbReference type="Rhea" id="RHEA-COMP:10651"/>
        <dbReference type="ChEBI" id="CHEBI:15378"/>
        <dbReference type="ChEBI" id="CHEBI:30013"/>
        <dbReference type="ChEBI" id="CHEBI:33019"/>
        <dbReference type="ChEBI" id="CHEBI:43474"/>
        <dbReference type="ChEBI" id="CHEBI:61977"/>
        <dbReference type="ChEBI" id="CHEBI:83586"/>
        <dbReference type="EC" id="2.7.4.27"/>
    </reaction>
</comment>
<comment type="similarity">
    <text evidence="1">Belongs to the pyruvate, phosphate/water dikinase regulatory protein family. PDRP subfamily.</text>
</comment>
<feature type="chain" id="PRO_1000136463" description="Putative pyruvate, phosphate dikinase regulatory protein">
    <location>
        <begin position="1"/>
        <end position="269"/>
    </location>
</feature>
<feature type="binding site" evidence="1">
    <location>
        <begin position="147"/>
        <end position="154"/>
    </location>
    <ligand>
        <name>ADP</name>
        <dbReference type="ChEBI" id="CHEBI:456216"/>
    </ligand>
</feature>
<evidence type="ECO:0000255" key="1">
    <source>
        <dbReference type="HAMAP-Rule" id="MF_00921"/>
    </source>
</evidence>
<name>PDRP_CLOBK</name>
<keyword id="KW-0418">Kinase</keyword>
<keyword id="KW-0547">Nucleotide-binding</keyword>
<keyword id="KW-0723">Serine/threonine-protein kinase</keyword>
<keyword id="KW-0808">Transferase</keyword>